<dbReference type="EC" id="2.7.7.60" evidence="1"/>
<dbReference type="EMBL" id="CP000821">
    <property type="protein sequence ID" value="ABV35903.1"/>
    <property type="molecule type" value="Genomic_DNA"/>
</dbReference>
<dbReference type="RefSeq" id="WP_012141639.1">
    <property type="nucleotide sequence ID" value="NC_009831.1"/>
</dbReference>
<dbReference type="SMR" id="A8FST0"/>
<dbReference type="STRING" id="425104.Ssed_1292"/>
<dbReference type="KEGG" id="sse:Ssed_1292"/>
<dbReference type="eggNOG" id="COG1211">
    <property type="taxonomic scope" value="Bacteria"/>
</dbReference>
<dbReference type="HOGENOM" id="CLU_061281_3_1_6"/>
<dbReference type="OrthoDB" id="9806837at2"/>
<dbReference type="UniPathway" id="UPA00056">
    <property type="reaction ID" value="UER00093"/>
</dbReference>
<dbReference type="Proteomes" id="UP000002015">
    <property type="component" value="Chromosome"/>
</dbReference>
<dbReference type="GO" id="GO:0050518">
    <property type="term" value="F:2-C-methyl-D-erythritol 4-phosphate cytidylyltransferase activity"/>
    <property type="evidence" value="ECO:0007669"/>
    <property type="project" value="UniProtKB-UniRule"/>
</dbReference>
<dbReference type="GO" id="GO:0019288">
    <property type="term" value="P:isopentenyl diphosphate biosynthetic process, methylerythritol 4-phosphate pathway"/>
    <property type="evidence" value="ECO:0007669"/>
    <property type="project" value="UniProtKB-UniRule"/>
</dbReference>
<dbReference type="CDD" id="cd02516">
    <property type="entry name" value="CDP-ME_synthetase"/>
    <property type="match status" value="1"/>
</dbReference>
<dbReference type="FunFam" id="3.90.550.10:FF:000003">
    <property type="entry name" value="2-C-methyl-D-erythritol 4-phosphate cytidylyltransferase"/>
    <property type="match status" value="1"/>
</dbReference>
<dbReference type="Gene3D" id="3.90.550.10">
    <property type="entry name" value="Spore Coat Polysaccharide Biosynthesis Protein SpsA, Chain A"/>
    <property type="match status" value="1"/>
</dbReference>
<dbReference type="HAMAP" id="MF_00108">
    <property type="entry name" value="IspD"/>
    <property type="match status" value="1"/>
</dbReference>
<dbReference type="InterPro" id="IPR001228">
    <property type="entry name" value="IspD"/>
</dbReference>
<dbReference type="InterPro" id="IPR034683">
    <property type="entry name" value="IspD/TarI"/>
</dbReference>
<dbReference type="InterPro" id="IPR050088">
    <property type="entry name" value="IspD/TarI_cytidylyltransf_bact"/>
</dbReference>
<dbReference type="InterPro" id="IPR029044">
    <property type="entry name" value="Nucleotide-diphossugar_trans"/>
</dbReference>
<dbReference type="NCBIfam" id="TIGR00453">
    <property type="entry name" value="ispD"/>
    <property type="match status" value="1"/>
</dbReference>
<dbReference type="PANTHER" id="PTHR32125">
    <property type="entry name" value="2-C-METHYL-D-ERYTHRITOL 4-PHOSPHATE CYTIDYLYLTRANSFERASE, CHLOROPLASTIC"/>
    <property type="match status" value="1"/>
</dbReference>
<dbReference type="PANTHER" id="PTHR32125:SF4">
    <property type="entry name" value="2-C-METHYL-D-ERYTHRITOL 4-PHOSPHATE CYTIDYLYLTRANSFERASE, CHLOROPLASTIC"/>
    <property type="match status" value="1"/>
</dbReference>
<dbReference type="Pfam" id="PF01128">
    <property type="entry name" value="IspD"/>
    <property type="match status" value="1"/>
</dbReference>
<dbReference type="SUPFAM" id="SSF53448">
    <property type="entry name" value="Nucleotide-diphospho-sugar transferases"/>
    <property type="match status" value="1"/>
</dbReference>
<evidence type="ECO:0000255" key="1">
    <source>
        <dbReference type="HAMAP-Rule" id="MF_00108"/>
    </source>
</evidence>
<proteinExistence type="inferred from homology"/>
<reference key="1">
    <citation type="submission" date="2007-08" db="EMBL/GenBank/DDBJ databases">
        <title>Complete sequence of Shewanella sediminis HAW-EB3.</title>
        <authorList>
            <consortium name="US DOE Joint Genome Institute"/>
            <person name="Copeland A."/>
            <person name="Lucas S."/>
            <person name="Lapidus A."/>
            <person name="Barry K."/>
            <person name="Glavina del Rio T."/>
            <person name="Dalin E."/>
            <person name="Tice H."/>
            <person name="Pitluck S."/>
            <person name="Chertkov O."/>
            <person name="Brettin T."/>
            <person name="Bruce D."/>
            <person name="Detter J.C."/>
            <person name="Han C."/>
            <person name="Schmutz J."/>
            <person name="Larimer F."/>
            <person name="Land M."/>
            <person name="Hauser L."/>
            <person name="Kyrpides N."/>
            <person name="Kim E."/>
            <person name="Zhao J.-S."/>
            <person name="Richardson P."/>
        </authorList>
    </citation>
    <scope>NUCLEOTIDE SEQUENCE [LARGE SCALE GENOMIC DNA]</scope>
    <source>
        <strain>HAW-EB3</strain>
    </source>
</reference>
<accession>A8FST0</accession>
<comment type="function">
    <text evidence="1">Catalyzes the formation of 4-diphosphocytidyl-2-C-methyl-D-erythritol from CTP and 2-C-methyl-D-erythritol 4-phosphate (MEP).</text>
</comment>
<comment type="catalytic activity">
    <reaction evidence="1">
        <text>2-C-methyl-D-erythritol 4-phosphate + CTP + H(+) = 4-CDP-2-C-methyl-D-erythritol + diphosphate</text>
        <dbReference type="Rhea" id="RHEA:13429"/>
        <dbReference type="ChEBI" id="CHEBI:15378"/>
        <dbReference type="ChEBI" id="CHEBI:33019"/>
        <dbReference type="ChEBI" id="CHEBI:37563"/>
        <dbReference type="ChEBI" id="CHEBI:57823"/>
        <dbReference type="ChEBI" id="CHEBI:58262"/>
        <dbReference type="EC" id="2.7.7.60"/>
    </reaction>
</comment>
<comment type="pathway">
    <text evidence="1">Isoprenoid biosynthesis; isopentenyl diphosphate biosynthesis via DXP pathway; isopentenyl diphosphate from 1-deoxy-D-xylulose 5-phosphate: step 2/6.</text>
</comment>
<comment type="similarity">
    <text evidence="1">Belongs to the IspD/TarI cytidylyltransferase family. IspD subfamily.</text>
</comment>
<sequence length="234" mass="25272">MNDSQDKIVAIVPAAGIGSRMGAEIPKQYLLIDEKTILQLTLELLLTHPKIDCVVVALHPEDQFFKGLPLSSHHKLHTVVGGSERADSVLACLNHLGGDCWAMVHDAARPCLTHGDIDKLIASRQRFPQGAILAAPVRDTMKRGNADGTVKETVCRERLWHALTPQLFPAALLKGNLEQALAQGANITDEASAMEWAGVSPGLVDGRVDNIKITHPDDLLLAGLFLGNAHSLER</sequence>
<protein>
    <recommendedName>
        <fullName evidence="1">2-C-methyl-D-erythritol 4-phosphate cytidylyltransferase</fullName>
        <ecNumber evidence="1">2.7.7.60</ecNumber>
    </recommendedName>
    <alternativeName>
        <fullName evidence="1">4-diphosphocytidyl-2C-methyl-D-erythritol synthase</fullName>
    </alternativeName>
    <alternativeName>
        <fullName evidence="1">MEP cytidylyltransferase</fullName>
        <shortName evidence="1">MCT</shortName>
    </alternativeName>
</protein>
<organism>
    <name type="scientific">Shewanella sediminis (strain HAW-EB3)</name>
    <dbReference type="NCBI Taxonomy" id="425104"/>
    <lineage>
        <taxon>Bacteria</taxon>
        <taxon>Pseudomonadati</taxon>
        <taxon>Pseudomonadota</taxon>
        <taxon>Gammaproteobacteria</taxon>
        <taxon>Alteromonadales</taxon>
        <taxon>Shewanellaceae</taxon>
        <taxon>Shewanella</taxon>
    </lineage>
</organism>
<gene>
    <name evidence="1" type="primary">ispD</name>
    <name type="ordered locus">Ssed_1292</name>
</gene>
<keyword id="KW-0414">Isoprene biosynthesis</keyword>
<keyword id="KW-0548">Nucleotidyltransferase</keyword>
<keyword id="KW-1185">Reference proteome</keyword>
<keyword id="KW-0808">Transferase</keyword>
<name>ISPD_SHESH</name>
<feature type="chain" id="PRO_1000075945" description="2-C-methyl-D-erythritol 4-phosphate cytidylyltransferase">
    <location>
        <begin position="1"/>
        <end position="234"/>
    </location>
</feature>
<feature type="site" description="Transition state stabilizer" evidence="1">
    <location>
        <position position="20"/>
    </location>
</feature>
<feature type="site" description="Transition state stabilizer" evidence="1">
    <location>
        <position position="27"/>
    </location>
</feature>
<feature type="site" description="Positions MEP for the nucleophilic attack" evidence="1">
    <location>
        <position position="156"/>
    </location>
</feature>
<feature type="site" description="Positions MEP for the nucleophilic attack" evidence="1">
    <location>
        <position position="212"/>
    </location>
</feature>